<gene>
    <name evidence="1" type="primary">rplI</name>
    <name type="ordered locus">BT_2161</name>
</gene>
<proteinExistence type="inferred from homology"/>
<name>RL9_BACTN</name>
<dbReference type="EMBL" id="AE015928">
    <property type="protein sequence ID" value="AAO77268.1"/>
    <property type="molecule type" value="Genomic_DNA"/>
</dbReference>
<dbReference type="RefSeq" id="NP_811074.1">
    <property type="nucleotide sequence ID" value="NC_004663.1"/>
</dbReference>
<dbReference type="RefSeq" id="WP_008759741.1">
    <property type="nucleotide sequence ID" value="NZ_UYXG01000020.1"/>
</dbReference>
<dbReference type="SMR" id="Q8A5S7"/>
<dbReference type="FunCoup" id="Q8A5S7">
    <property type="interactions" value="670"/>
</dbReference>
<dbReference type="STRING" id="226186.BT_2161"/>
<dbReference type="PaxDb" id="226186-BT_2161"/>
<dbReference type="EnsemblBacteria" id="AAO77268">
    <property type="protein sequence ID" value="AAO77268"/>
    <property type="gene ID" value="BT_2161"/>
</dbReference>
<dbReference type="GeneID" id="60923331"/>
<dbReference type="KEGG" id="bth:BT_2161"/>
<dbReference type="PATRIC" id="fig|226186.12.peg.2225"/>
<dbReference type="eggNOG" id="COG0359">
    <property type="taxonomic scope" value="Bacteria"/>
</dbReference>
<dbReference type="HOGENOM" id="CLU_078938_3_0_10"/>
<dbReference type="InParanoid" id="Q8A5S7"/>
<dbReference type="OrthoDB" id="9788336at2"/>
<dbReference type="Proteomes" id="UP000001414">
    <property type="component" value="Chromosome"/>
</dbReference>
<dbReference type="GO" id="GO:0022625">
    <property type="term" value="C:cytosolic large ribosomal subunit"/>
    <property type="evidence" value="ECO:0000318"/>
    <property type="project" value="GO_Central"/>
</dbReference>
<dbReference type="GO" id="GO:0019843">
    <property type="term" value="F:rRNA binding"/>
    <property type="evidence" value="ECO:0007669"/>
    <property type="project" value="UniProtKB-UniRule"/>
</dbReference>
<dbReference type="GO" id="GO:0003735">
    <property type="term" value="F:structural constituent of ribosome"/>
    <property type="evidence" value="ECO:0007669"/>
    <property type="project" value="InterPro"/>
</dbReference>
<dbReference type="GO" id="GO:0006412">
    <property type="term" value="P:translation"/>
    <property type="evidence" value="ECO:0007669"/>
    <property type="project" value="UniProtKB-UniRule"/>
</dbReference>
<dbReference type="FunFam" id="3.10.430.100:FF:000006">
    <property type="entry name" value="50S ribosomal protein L9"/>
    <property type="match status" value="1"/>
</dbReference>
<dbReference type="FunFam" id="3.40.5.10:FF:000004">
    <property type="entry name" value="50S ribosomal protein L9"/>
    <property type="match status" value="1"/>
</dbReference>
<dbReference type="Gene3D" id="3.10.430.100">
    <property type="entry name" value="Ribosomal protein L9, C-terminal domain"/>
    <property type="match status" value="1"/>
</dbReference>
<dbReference type="Gene3D" id="3.40.5.10">
    <property type="entry name" value="Ribosomal protein L9, N-terminal domain"/>
    <property type="match status" value="1"/>
</dbReference>
<dbReference type="HAMAP" id="MF_00503">
    <property type="entry name" value="Ribosomal_bL9"/>
    <property type="match status" value="1"/>
</dbReference>
<dbReference type="InterPro" id="IPR000244">
    <property type="entry name" value="Ribosomal_bL9"/>
</dbReference>
<dbReference type="InterPro" id="IPR009027">
    <property type="entry name" value="Ribosomal_bL9/RNase_H1_N"/>
</dbReference>
<dbReference type="InterPro" id="IPR020594">
    <property type="entry name" value="Ribosomal_bL9_bac/chp"/>
</dbReference>
<dbReference type="InterPro" id="IPR020069">
    <property type="entry name" value="Ribosomal_bL9_C"/>
</dbReference>
<dbReference type="InterPro" id="IPR036791">
    <property type="entry name" value="Ribosomal_bL9_C_sf"/>
</dbReference>
<dbReference type="InterPro" id="IPR020070">
    <property type="entry name" value="Ribosomal_bL9_N"/>
</dbReference>
<dbReference type="InterPro" id="IPR036935">
    <property type="entry name" value="Ribosomal_bL9_N_sf"/>
</dbReference>
<dbReference type="NCBIfam" id="TIGR00158">
    <property type="entry name" value="L9"/>
    <property type="match status" value="1"/>
</dbReference>
<dbReference type="PANTHER" id="PTHR21368">
    <property type="entry name" value="50S RIBOSOMAL PROTEIN L9"/>
    <property type="match status" value="1"/>
</dbReference>
<dbReference type="Pfam" id="PF03948">
    <property type="entry name" value="Ribosomal_L9_C"/>
    <property type="match status" value="1"/>
</dbReference>
<dbReference type="Pfam" id="PF01281">
    <property type="entry name" value="Ribosomal_L9_N"/>
    <property type="match status" value="1"/>
</dbReference>
<dbReference type="SUPFAM" id="SSF55658">
    <property type="entry name" value="L9 N-domain-like"/>
    <property type="match status" value="1"/>
</dbReference>
<dbReference type="SUPFAM" id="SSF55653">
    <property type="entry name" value="Ribosomal protein L9 C-domain"/>
    <property type="match status" value="1"/>
</dbReference>
<dbReference type="PROSITE" id="PS00651">
    <property type="entry name" value="RIBOSOMAL_L9"/>
    <property type="match status" value="1"/>
</dbReference>
<comment type="function">
    <text evidence="1">Binds to the 23S rRNA.</text>
</comment>
<comment type="similarity">
    <text evidence="1">Belongs to the bacterial ribosomal protein bL9 family.</text>
</comment>
<sequence length="147" mass="15981">MEIILKEDIVNLGYKNDIVNVKSGYGRNYLIPTGKAIIASPSAKKMLAEDLKQRAHKLEKIKKDAEALAAKLEGVSLTIATKVSSTGTIFGSVSNIQIAEALAKLGHEIDRKIIVVKDAVKEVGNYKAIVKLHKEVSVEIPFEVVAE</sequence>
<protein>
    <recommendedName>
        <fullName evidence="1">Large ribosomal subunit protein bL9</fullName>
    </recommendedName>
    <alternativeName>
        <fullName evidence="2">50S ribosomal protein L9</fullName>
    </alternativeName>
</protein>
<feature type="chain" id="PRO_0000236482" description="Large ribosomal subunit protein bL9">
    <location>
        <begin position="1"/>
        <end position="147"/>
    </location>
</feature>
<reference key="1">
    <citation type="journal article" date="2003" name="Science">
        <title>A genomic view of the human-Bacteroides thetaiotaomicron symbiosis.</title>
        <authorList>
            <person name="Xu J."/>
            <person name="Bjursell M.K."/>
            <person name="Himrod J."/>
            <person name="Deng S."/>
            <person name="Carmichael L.K."/>
            <person name="Chiang H.C."/>
            <person name="Hooper L.V."/>
            <person name="Gordon J.I."/>
        </authorList>
    </citation>
    <scope>NUCLEOTIDE SEQUENCE [LARGE SCALE GENOMIC DNA]</scope>
    <source>
        <strain>ATCC 29148 / DSM 2079 / JCM 5827 / CCUG 10774 / NCTC 10582 / VPI-5482 / E50</strain>
    </source>
</reference>
<accession>Q8A5S7</accession>
<keyword id="KW-1185">Reference proteome</keyword>
<keyword id="KW-0687">Ribonucleoprotein</keyword>
<keyword id="KW-0689">Ribosomal protein</keyword>
<keyword id="KW-0694">RNA-binding</keyword>
<keyword id="KW-0699">rRNA-binding</keyword>
<organism>
    <name type="scientific">Bacteroides thetaiotaomicron (strain ATCC 29148 / DSM 2079 / JCM 5827 / CCUG 10774 / NCTC 10582 / VPI-5482 / E50)</name>
    <dbReference type="NCBI Taxonomy" id="226186"/>
    <lineage>
        <taxon>Bacteria</taxon>
        <taxon>Pseudomonadati</taxon>
        <taxon>Bacteroidota</taxon>
        <taxon>Bacteroidia</taxon>
        <taxon>Bacteroidales</taxon>
        <taxon>Bacteroidaceae</taxon>
        <taxon>Bacteroides</taxon>
    </lineage>
</organism>
<evidence type="ECO:0000255" key="1">
    <source>
        <dbReference type="HAMAP-Rule" id="MF_00503"/>
    </source>
</evidence>
<evidence type="ECO:0000305" key="2"/>